<protein>
    <recommendedName>
        <fullName>Cytochrome c oxidase subunit 1</fullName>
        <ecNumber>7.1.1.9</ecNumber>
    </recommendedName>
    <alternativeName>
        <fullName>Cytochrome c oxidase polypeptide I</fullName>
    </alternativeName>
</protein>
<gene>
    <name type="primary">COI</name>
</gene>
<dbReference type="EC" id="7.1.1.9"/>
<dbReference type="EMBL" id="X16888">
    <property type="protein sequence ID" value="CAA34768.1"/>
    <property type="molecule type" value="Genomic_DNA"/>
</dbReference>
<dbReference type="EMBL" id="X55514">
    <property type="protein sequence ID" value="CAA39124.1"/>
    <property type="molecule type" value="Genomic_DNA"/>
</dbReference>
<dbReference type="PIR" id="S14205">
    <property type="entry name" value="S14205"/>
</dbReference>
<dbReference type="SMR" id="P25001"/>
<dbReference type="UniPathway" id="UPA00705"/>
<dbReference type="GO" id="GO:0005743">
    <property type="term" value="C:mitochondrial inner membrane"/>
    <property type="evidence" value="ECO:0007669"/>
    <property type="project" value="UniProtKB-SubCell"/>
</dbReference>
<dbReference type="GO" id="GO:0045277">
    <property type="term" value="C:respiratory chain complex IV"/>
    <property type="evidence" value="ECO:0007669"/>
    <property type="project" value="InterPro"/>
</dbReference>
<dbReference type="GO" id="GO:0004129">
    <property type="term" value="F:cytochrome-c oxidase activity"/>
    <property type="evidence" value="ECO:0007669"/>
    <property type="project" value="UniProtKB-EC"/>
</dbReference>
<dbReference type="GO" id="GO:0020037">
    <property type="term" value="F:heme binding"/>
    <property type="evidence" value="ECO:0007669"/>
    <property type="project" value="InterPro"/>
</dbReference>
<dbReference type="GO" id="GO:0046872">
    <property type="term" value="F:metal ion binding"/>
    <property type="evidence" value="ECO:0007669"/>
    <property type="project" value="UniProtKB-KW"/>
</dbReference>
<dbReference type="GO" id="GO:0015990">
    <property type="term" value="P:electron transport coupled proton transport"/>
    <property type="evidence" value="ECO:0007669"/>
    <property type="project" value="TreeGrafter"/>
</dbReference>
<dbReference type="GO" id="GO:0006123">
    <property type="term" value="P:mitochondrial electron transport, cytochrome c to oxygen"/>
    <property type="evidence" value="ECO:0007669"/>
    <property type="project" value="TreeGrafter"/>
</dbReference>
<dbReference type="CDD" id="cd01663">
    <property type="entry name" value="Cyt_c_Oxidase_I"/>
    <property type="match status" value="1"/>
</dbReference>
<dbReference type="FunFam" id="1.20.210.10:FF:000001">
    <property type="entry name" value="Cytochrome c oxidase subunit 1"/>
    <property type="match status" value="1"/>
</dbReference>
<dbReference type="Gene3D" id="1.20.210.10">
    <property type="entry name" value="Cytochrome c oxidase-like, subunit I domain"/>
    <property type="match status" value="1"/>
</dbReference>
<dbReference type="InterPro" id="IPR023616">
    <property type="entry name" value="Cyt_c_oxase-like_su1_dom"/>
</dbReference>
<dbReference type="InterPro" id="IPR036927">
    <property type="entry name" value="Cyt_c_oxase-like_su1_sf"/>
</dbReference>
<dbReference type="InterPro" id="IPR000883">
    <property type="entry name" value="Cyt_C_Oxase_1"/>
</dbReference>
<dbReference type="InterPro" id="IPR023615">
    <property type="entry name" value="Cyt_c_Oxase_su1_BS"/>
</dbReference>
<dbReference type="InterPro" id="IPR033944">
    <property type="entry name" value="Cyt_c_oxase_su1_dom"/>
</dbReference>
<dbReference type="PANTHER" id="PTHR10422">
    <property type="entry name" value="CYTOCHROME C OXIDASE SUBUNIT 1"/>
    <property type="match status" value="1"/>
</dbReference>
<dbReference type="PANTHER" id="PTHR10422:SF18">
    <property type="entry name" value="CYTOCHROME C OXIDASE SUBUNIT 1"/>
    <property type="match status" value="1"/>
</dbReference>
<dbReference type="Pfam" id="PF00115">
    <property type="entry name" value="COX1"/>
    <property type="match status" value="1"/>
</dbReference>
<dbReference type="PRINTS" id="PR01165">
    <property type="entry name" value="CYCOXIDASEI"/>
</dbReference>
<dbReference type="SUPFAM" id="SSF81442">
    <property type="entry name" value="Cytochrome c oxidase subunit I-like"/>
    <property type="match status" value="1"/>
</dbReference>
<dbReference type="PROSITE" id="PS50855">
    <property type="entry name" value="COX1"/>
    <property type="match status" value="1"/>
</dbReference>
<dbReference type="PROSITE" id="PS00077">
    <property type="entry name" value="COX1_CUB"/>
    <property type="match status" value="1"/>
</dbReference>
<comment type="function">
    <text evidence="2">Component of the cytochrome c oxidase, the last enzyme in the mitochondrial electron transport chain which drives oxidative phosphorylation. The respiratory chain contains 3 multisubunit complexes succinate dehydrogenase (complex II, CII), ubiquinol-cytochrome c oxidoreductase (cytochrome b-c1 complex, complex III, CIII) and cytochrome c oxidase (complex IV, CIV), that cooperate to transfer electrons derived from NADH and succinate to molecular oxygen, creating an electrochemical gradient over the inner membrane that drives transmembrane transport and the ATP synthase. Cytochrome c oxidase is the component of the respiratory chain that catalyzes the reduction of oxygen to water. Electrons originating from reduced cytochrome c in the intermembrane space (IMS) are transferred via the dinuclear copper A center (CU(A)) of subunit 2 and heme A of subunit 1 to the active site in subunit 1, a binuclear center (BNC) formed by heme A3 and copper B (CU(B)). The BNC reduces molecular oxygen to 2 water molecules using 4 electrons from cytochrome c in the IMS and 4 protons from the mitochondrial matrix.</text>
</comment>
<comment type="catalytic activity">
    <reaction evidence="2">
        <text>4 Fe(II)-[cytochrome c] + O2 + 8 H(+)(in) = 4 Fe(III)-[cytochrome c] + 2 H2O + 4 H(+)(out)</text>
        <dbReference type="Rhea" id="RHEA:11436"/>
        <dbReference type="Rhea" id="RHEA-COMP:10350"/>
        <dbReference type="Rhea" id="RHEA-COMP:14399"/>
        <dbReference type="ChEBI" id="CHEBI:15377"/>
        <dbReference type="ChEBI" id="CHEBI:15378"/>
        <dbReference type="ChEBI" id="CHEBI:15379"/>
        <dbReference type="ChEBI" id="CHEBI:29033"/>
        <dbReference type="ChEBI" id="CHEBI:29034"/>
        <dbReference type="EC" id="7.1.1.9"/>
    </reaction>
    <physiologicalReaction direction="left-to-right" evidence="2">
        <dbReference type="Rhea" id="RHEA:11437"/>
    </physiologicalReaction>
</comment>
<comment type="cofactor">
    <cofactor evidence="2">
        <name>heme</name>
        <dbReference type="ChEBI" id="CHEBI:30413"/>
    </cofactor>
    <text evidence="2">Binds 2 heme A groups non-covalently per subunit.</text>
</comment>
<comment type="cofactor">
    <cofactor evidence="2">
        <name>Cu cation</name>
        <dbReference type="ChEBI" id="CHEBI:23378"/>
    </cofactor>
    <text evidence="2">Binds a copper B center.</text>
</comment>
<comment type="pathway">
    <text evidence="2">Energy metabolism; oxidative phosphorylation.</text>
</comment>
<comment type="subunit">
    <text evidence="2">Component of the cytochrome c oxidase (complex IV, CIV), a multisubunit enzyme composed of a catalytic core of 3 subunits and several supernumerary subunits. The complex exists as a monomer or a dimer and forms supercomplexes (SCs) in the inner mitochondrial membrane with ubiquinol-cytochrome c oxidoreductase (cytochrome b-c1 complex, complex III, CIII).</text>
</comment>
<comment type="subcellular location">
    <subcellularLocation>
        <location evidence="2">Mitochondrion inner membrane</location>
        <topology evidence="2">Multi-pass membrane protein</topology>
    </subcellularLocation>
</comment>
<comment type="similarity">
    <text evidence="4">Belongs to the heme-copper respiratory oxidase family.</text>
</comment>
<keyword id="KW-0106">Calcium</keyword>
<keyword id="KW-0186">Copper</keyword>
<keyword id="KW-0249">Electron transport</keyword>
<keyword id="KW-0349">Heme</keyword>
<keyword id="KW-0408">Iron</keyword>
<keyword id="KW-0460">Magnesium</keyword>
<keyword id="KW-0472">Membrane</keyword>
<keyword id="KW-0479">Metal-binding</keyword>
<keyword id="KW-0496">Mitochondrion</keyword>
<keyword id="KW-0999">Mitochondrion inner membrane</keyword>
<keyword id="KW-0679">Respiratory chain</keyword>
<keyword id="KW-1278">Translocase</keyword>
<keyword id="KW-0812">Transmembrane</keyword>
<keyword id="KW-1133">Transmembrane helix</keyword>
<keyword id="KW-0813">Transport</keyword>
<organism>
    <name type="scientific">Pisaster ochraceus</name>
    <name type="common">Ochre sea star</name>
    <name type="synonym">Asterias ochracea</name>
    <dbReference type="NCBI Taxonomy" id="7612"/>
    <lineage>
        <taxon>Eukaryota</taxon>
        <taxon>Metazoa</taxon>
        <taxon>Echinodermata</taxon>
        <taxon>Eleutherozoa</taxon>
        <taxon>Asterozoa</taxon>
        <taxon>Asteroidea</taxon>
        <taxon>Forcipulatacea</taxon>
        <taxon>Forcipulatida</taxon>
        <taxon>Asteriidae</taxon>
        <taxon>Pisaster</taxon>
    </lineage>
</organism>
<geneLocation type="mitochondrion"/>
<name>COX1_PISOC</name>
<evidence type="ECO:0000250" key="1">
    <source>
        <dbReference type="UniProtKB" id="P00396"/>
    </source>
</evidence>
<evidence type="ECO:0000250" key="2">
    <source>
        <dbReference type="UniProtKB" id="P00401"/>
    </source>
</evidence>
<evidence type="ECO:0000255" key="3"/>
<evidence type="ECO:0000305" key="4"/>
<proteinExistence type="inferred from homology"/>
<reference key="1">
    <citation type="journal article" date="1990" name="J. Mol. Evol.">
        <title>Nucleotide sequence of nine protein-coding genes and 22 tRNAs in the mitochondrial DNA of the sea star Pisaster ochraceus.</title>
        <authorList>
            <person name="Smith M.J."/>
            <person name="Banfield D.K."/>
            <person name="Doteval K."/>
            <person name="Gorski S."/>
            <person name="Kowbel D.J."/>
        </authorList>
    </citation>
    <scope>NUCLEOTIDE SEQUENCE [GENOMIC DNA]</scope>
</reference>
<reference key="2">
    <citation type="journal article" date="1989" name="Curr. Genet.">
        <title>Conserved tRNA gene cluster in starfish mitochondrial DNA.</title>
        <authorList>
            <person name="Jacobs H.T."/>
            <person name="Asakawa S."/>
            <person name="Araki T."/>
            <person name="Miura K."/>
            <person name="Smith M.J."/>
            <person name="Watanabe K."/>
        </authorList>
    </citation>
    <scope>NUCLEOTIDE SEQUENCE [GENOMIC DNA] OF 1-8</scope>
</reference>
<sequence>MQLSRWLFSTNHKDIGTLYLIFGAWAGMIGTAMSVIIRTELAQPGSLLQDDQIYNVIVTAHALVMIFFMVMPIMIGGFGNWLIPLMIGAPDMAFPRMNNMSFWLIPPSFLLLLASAGVESGTGTGWTIYPPLSSGLAHAGGSVDLAIFSLHLAGASSILASINFITTIINMRTPGMSFDRLPLFVWSVFVTAFLLLLSLPVLAGAITMLLTDRNINTTFFDPAGGGDPILFQHLFWFFGHPEVYILILPGFGMISHVIAHYAGKNEPFGYLGMVYAIISIGILGFLVWAHHMFTVGMDVDTRAYFTAATMIIAVPTGIKVFSWMATLQGSNLRWDTPLLWALGFVFLFTIGGLTGVVLANSSIDIILHDTHYVVAHFHYVLSMGAVFAIFAGFTHWFPLFSGVSLHPLWSKVHFAVMFIGVNLTFFPQHFLGLAGMPRRYSDYPDAYTLWNTVSSIGSTISLIRTLIFLFLIWEAFSTKRTPIHPEFSSSSLEWQYPSFPPSHHTFDETPSAVYLIK</sequence>
<accession>P25001</accession>
<feature type="chain" id="PRO_0000183392" description="Cytochrome c oxidase subunit 1">
    <location>
        <begin position="1"/>
        <end position="517"/>
    </location>
</feature>
<feature type="transmembrane region" description="Helical" evidence="3">
    <location>
        <begin position="17"/>
        <end position="37"/>
    </location>
</feature>
<feature type="transmembrane region" description="Helical" evidence="3">
    <location>
        <begin position="63"/>
        <end position="83"/>
    </location>
</feature>
<feature type="transmembrane region" description="Helical" evidence="3">
    <location>
        <begin position="100"/>
        <end position="120"/>
    </location>
</feature>
<feature type="transmembrane region" description="Helical" evidence="3">
    <location>
        <begin position="145"/>
        <end position="165"/>
    </location>
</feature>
<feature type="transmembrane region" description="Helical" evidence="3">
    <location>
        <begin position="183"/>
        <end position="203"/>
    </location>
</feature>
<feature type="transmembrane region" description="Helical" evidence="3">
    <location>
        <begin position="234"/>
        <end position="254"/>
    </location>
</feature>
<feature type="transmembrane region" description="Helical" evidence="3">
    <location>
        <begin position="268"/>
        <end position="288"/>
    </location>
</feature>
<feature type="transmembrane region" description="Helical" evidence="3">
    <location>
        <begin position="305"/>
        <end position="325"/>
    </location>
</feature>
<feature type="transmembrane region" description="Helical" evidence="3">
    <location>
        <begin position="338"/>
        <end position="358"/>
    </location>
</feature>
<feature type="transmembrane region" description="Helical" evidence="3">
    <location>
        <begin position="380"/>
        <end position="400"/>
    </location>
</feature>
<feature type="transmembrane region" description="Helical" evidence="3">
    <location>
        <begin position="414"/>
        <end position="434"/>
    </location>
</feature>
<feature type="transmembrane region" description="Helical" evidence="3">
    <location>
        <begin position="456"/>
        <end position="476"/>
    </location>
</feature>
<feature type="binding site" evidence="2">
    <location>
        <position position="40"/>
    </location>
    <ligand>
        <name>Ca(2+)</name>
        <dbReference type="ChEBI" id="CHEBI:29108"/>
    </ligand>
</feature>
<feature type="binding site" evidence="2">
    <location>
        <position position="45"/>
    </location>
    <ligand>
        <name>Ca(2+)</name>
        <dbReference type="ChEBI" id="CHEBI:29108"/>
    </ligand>
</feature>
<feature type="binding site" description="axial binding residue" evidence="2">
    <location>
        <position position="61"/>
    </location>
    <ligand>
        <name>Fe(II)-heme a</name>
        <dbReference type="ChEBI" id="CHEBI:61715"/>
        <note>low-spin</note>
    </ligand>
    <ligandPart>
        <name>Fe</name>
        <dbReference type="ChEBI" id="CHEBI:18248"/>
    </ligandPart>
</feature>
<feature type="binding site" evidence="2">
    <location>
        <position position="240"/>
    </location>
    <ligand>
        <name>Cu cation</name>
        <dbReference type="ChEBI" id="CHEBI:23378"/>
        <label>B</label>
    </ligand>
</feature>
<feature type="binding site" evidence="1">
    <location>
        <position position="244"/>
    </location>
    <ligand>
        <name>O2</name>
        <dbReference type="ChEBI" id="CHEBI:15379"/>
    </ligand>
</feature>
<feature type="binding site" evidence="2">
    <location>
        <position position="290"/>
    </location>
    <ligand>
        <name>Cu cation</name>
        <dbReference type="ChEBI" id="CHEBI:23378"/>
        <label>B</label>
    </ligand>
</feature>
<feature type="binding site" evidence="2">
    <location>
        <position position="291"/>
    </location>
    <ligand>
        <name>Cu cation</name>
        <dbReference type="ChEBI" id="CHEBI:23378"/>
        <label>B</label>
    </ligand>
</feature>
<feature type="binding site" evidence="2">
    <location>
        <position position="368"/>
    </location>
    <ligand>
        <name>Mg(2+)</name>
        <dbReference type="ChEBI" id="CHEBI:18420"/>
        <note>ligand shared with subunit 2</note>
    </ligand>
</feature>
<feature type="binding site" evidence="2">
    <location>
        <position position="369"/>
    </location>
    <ligand>
        <name>Mg(2+)</name>
        <dbReference type="ChEBI" id="CHEBI:18420"/>
        <note>ligand shared with subunit 2</note>
    </ligand>
</feature>
<feature type="binding site" description="axial binding residue" evidence="2">
    <location>
        <position position="376"/>
    </location>
    <ligand>
        <name>heme a3</name>
        <dbReference type="ChEBI" id="CHEBI:83282"/>
        <note>high-spin</note>
    </ligand>
    <ligandPart>
        <name>Fe</name>
        <dbReference type="ChEBI" id="CHEBI:18248"/>
    </ligandPart>
</feature>
<feature type="binding site" description="axial binding residue" evidence="2">
    <location>
        <position position="378"/>
    </location>
    <ligand>
        <name>Fe(II)-heme a</name>
        <dbReference type="ChEBI" id="CHEBI:61715"/>
        <note>low-spin</note>
    </ligand>
    <ligandPart>
        <name>Fe</name>
        <dbReference type="ChEBI" id="CHEBI:18248"/>
    </ligandPart>
</feature>
<feature type="cross-link" description="1'-histidyl-3'-tyrosine (His-Tyr)" evidence="2">
    <location>
        <begin position="240"/>
        <end position="244"/>
    </location>
</feature>